<protein>
    <recommendedName>
        <fullName>Putative uncharacterized protein YAR069C</fullName>
    </recommendedName>
</protein>
<reference key="1">
    <citation type="submission" date="1994-02" db="EMBL/GenBank/DDBJ databases">
        <title>Sequencing of chromosome I of Saccharomyces cerevisiae: analysis of the 52 Kbp CDC15-FLO1-PHO11-YAR074 region.</title>
        <authorList>
            <person name="Bussey H."/>
            <person name="Keng T."/>
            <person name="Storms R.K."/>
            <person name="Vo D."/>
            <person name="Zhong W."/>
            <person name="Fortin N."/>
            <person name="Barton A.B."/>
            <person name="Kaback D.B."/>
            <person name="Clark M.W."/>
        </authorList>
    </citation>
    <scope>NUCLEOTIDE SEQUENCE [GENOMIC DNA]</scope>
    <source>
        <strain>ATCC 204511 / S288c / AB972</strain>
    </source>
</reference>
<reference key="2">
    <citation type="journal article" date="1995" name="Proc. Natl. Acad. Sci. U.S.A.">
        <title>The nucleotide sequence of chromosome I from Saccharomyces cerevisiae.</title>
        <authorList>
            <person name="Bussey H."/>
            <person name="Kaback D.B."/>
            <person name="Zhong W.-W."/>
            <person name="Vo D.H."/>
            <person name="Clark M.W."/>
            <person name="Fortin N."/>
            <person name="Hall J."/>
            <person name="Ouellette B.F.F."/>
            <person name="Keng T."/>
            <person name="Barton A.B."/>
            <person name="Su Y."/>
            <person name="Davies C.J."/>
            <person name="Storms R.K."/>
        </authorList>
    </citation>
    <scope>NUCLEOTIDE SEQUENCE [LARGE SCALE GENOMIC DNA]</scope>
    <source>
        <strain>ATCC 204508 / S288c</strain>
    </source>
</reference>
<reference key="3">
    <citation type="journal article" date="2014" name="G3 (Bethesda)">
        <title>The reference genome sequence of Saccharomyces cerevisiae: Then and now.</title>
        <authorList>
            <person name="Engel S.R."/>
            <person name="Dietrich F.S."/>
            <person name="Fisk D.G."/>
            <person name="Binkley G."/>
            <person name="Balakrishnan R."/>
            <person name="Costanzo M.C."/>
            <person name="Dwight S.S."/>
            <person name="Hitz B.C."/>
            <person name="Karra K."/>
            <person name="Nash R.S."/>
            <person name="Weng S."/>
            <person name="Wong E.D."/>
            <person name="Lloyd P."/>
            <person name="Skrzypek M.S."/>
            <person name="Miyasato S.R."/>
            <person name="Simison M."/>
            <person name="Cherry J.M."/>
        </authorList>
    </citation>
    <scope>GENOME REANNOTATION</scope>
    <source>
        <strain>ATCC 204508 / S288c</strain>
    </source>
</reference>
<feature type="chain" id="PRO_0000202435" description="Putative uncharacterized protein YAR069C">
    <location>
        <begin position="1"/>
        <end position="97"/>
    </location>
</feature>
<feature type="transmembrane region" description="Helical" evidence="1">
    <location>
        <begin position="5"/>
        <end position="25"/>
    </location>
</feature>
<feature type="transmembrane region" description="Helical" evidence="1">
    <location>
        <begin position="27"/>
        <end position="47"/>
    </location>
</feature>
<feature type="transmembrane region" description="Helical" evidence="1">
    <location>
        <begin position="77"/>
        <end position="97"/>
    </location>
</feature>
<evidence type="ECO:0000255" key="1"/>
<evidence type="ECO:0000305" key="2"/>
<evidence type="ECO:0000305" key="3">
    <source>
    </source>
</evidence>
<sequence length="97" mass="10917">MEDHTLVAIVVFFGNGEPFHVSLSVEMVFVLLLSSTRIHEVVVLICYKLQHATWSWGNMSKNFSLKPDISLSFLLDIISINDICIYGCIALTVVFIL</sequence>
<gene>
    <name type="ordered locus">YAR069C</name>
</gene>
<dbReference type="EMBL" id="L28920">
    <property type="protein sequence ID" value="AAC09506.1"/>
    <property type="molecule type" value="Genomic_DNA"/>
</dbReference>
<dbReference type="PIR" id="S53474">
    <property type="entry name" value="S53474"/>
</dbReference>
<dbReference type="RefSeq" id="NP_878094.1">
    <property type="nucleotide sequence ID" value="NM_001184601.1"/>
</dbReference>
<dbReference type="STRING" id="4932.YAR069C"/>
<dbReference type="PaxDb" id="4932-YAR069C"/>
<dbReference type="TopDownProteomics" id="P0CX92"/>
<dbReference type="EnsemblFungi" id="YAR069C_mRNA">
    <property type="protein sequence ID" value="YAR069C"/>
    <property type="gene ID" value="YAR069C"/>
</dbReference>
<dbReference type="EnsemblFungi" id="YHR214C-D_mRNA">
    <property type="protein sequence ID" value="YHR214C-D"/>
    <property type="gene ID" value="YHR214C-D"/>
</dbReference>
<dbReference type="KEGG" id="sce:YHR214C-D"/>
<dbReference type="AGR" id="SGD:S000000092"/>
<dbReference type="SGD" id="S000000092">
    <property type="gene designation" value="YAR069C"/>
</dbReference>
<dbReference type="VEuPathDB" id="FungiDB:YHR214C-D"/>
<dbReference type="HOGENOM" id="CLU_2348290_0_0_1"/>
<dbReference type="ExpressionAtlas" id="P0CX92">
    <property type="expression patterns" value="baseline"/>
</dbReference>
<dbReference type="GO" id="GO:0016020">
    <property type="term" value="C:membrane"/>
    <property type="evidence" value="ECO:0007669"/>
    <property type="project" value="UniProtKB-SubCell"/>
</dbReference>
<comment type="subcellular location">
    <subcellularLocation>
        <location evidence="2">Membrane</location>
        <topology evidence="2">Multi-pass membrane protein</topology>
    </subcellularLocation>
</comment>
<comment type="caution">
    <text evidence="3">Product of a dubious gene prediction unlikely to encode a functional protein. Because of that it is not part of the S.cerevisiae S288c complete/reference proteome set.</text>
</comment>
<name>YAN9_YEAST</name>
<keyword id="KW-0472">Membrane</keyword>
<keyword id="KW-0812">Transmembrane</keyword>
<keyword id="KW-1133">Transmembrane helix</keyword>
<organism>
    <name type="scientific">Saccharomyces cerevisiae (strain ATCC 204508 / S288c)</name>
    <name type="common">Baker's yeast</name>
    <dbReference type="NCBI Taxonomy" id="559292"/>
    <lineage>
        <taxon>Eukaryota</taxon>
        <taxon>Fungi</taxon>
        <taxon>Dikarya</taxon>
        <taxon>Ascomycota</taxon>
        <taxon>Saccharomycotina</taxon>
        <taxon>Saccharomycetes</taxon>
        <taxon>Saccharomycetales</taxon>
        <taxon>Saccharomycetaceae</taxon>
        <taxon>Saccharomyces</taxon>
    </lineage>
</organism>
<proteinExistence type="uncertain"/>
<accession>P0CX92</accession>
<accession>D3DLG8</accession>
<accession>P39565</accession>
<accession>Q547K7</accession>